<gene>
    <name type="primary">dnaE</name>
</gene>
<protein>
    <recommendedName>
        <fullName>DNA polymerase III subunit alpha</fullName>
        <ecNumber>2.7.7.7</ecNumber>
    </recommendedName>
</protein>
<organism>
    <name type="scientific">Streptococcus pyogenes</name>
    <dbReference type="NCBI Taxonomy" id="1314"/>
    <lineage>
        <taxon>Bacteria</taxon>
        <taxon>Bacillati</taxon>
        <taxon>Bacillota</taxon>
        <taxon>Bacilli</taxon>
        <taxon>Lactobacillales</taxon>
        <taxon>Streptococcaceae</taxon>
        <taxon>Streptococcus</taxon>
    </lineage>
</organism>
<keyword id="KW-0963">Cytoplasm</keyword>
<keyword id="KW-0235">DNA replication</keyword>
<keyword id="KW-0239">DNA-directed DNA polymerase</keyword>
<keyword id="KW-0548">Nucleotidyltransferase</keyword>
<keyword id="KW-0808">Transferase</keyword>
<proteinExistence type="inferred from homology"/>
<accession>P0C0F2</accession>
<accession>Q9FDF6</accession>
<reference key="1">
    <citation type="journal article" date="2000" name="J. Biol. Chem.">
        <title>The DNA replication machine of a Gram-positive organism.</title>
        <authorList>
            <person name="Bruck I."/>
            <person name="O'Donnell M."/>
        </authorList>
    </citation>
    <scope>NUCLEOTIDE SEQUENCE [GENOMIC DNA]</scope>
</reference>
<comment type="function">
    <text evidence="1">DNA polymerase III is a complex, multichain enzyme responsible for most of the replicative synthesis in bacteria. This DNA polymerase also exhibits 3' to 5' exonuclease activity. The alpha chain is the DNA polymerase (By similarity).</text>
</comment>
<comment type="catalytic activity">
    <reaction>
        <text>DNA(n) + a 2'-deoxyribonucleoside 5'-triphosphate = DNA(n+1) + diphosphate</text>
        <dbReference type="Rhea" id="RHEA:22508"/>
        <dbReference type="Rhea" id="RHEA-COMP:17339"/>
        <dbReference type="Rhea" id="RHEA-COMP:17340"/>
        <dbReference type="ChEBI" id="CHEBI:33019"/>
        <dbReference type="ChEBI" id="CHEBI:61560"/>
        <dbReference type="ChEBI" id="CHEBI:173112"/>
        <dbReference type="EC" id="2.7.7.7"/>
    </reaction>
</comment>
<comment type="subunit">
    <text evidence="1">DNA polymerase III contains a core (composed of alpha, epsilon and theta chains) that associates with a tau subunit. This core dimerizes to form the PolIII' complex. PolIII' associates with the gamma complex (composed of gamma, delta, delta', psi and chi chains) and with the beta chain to form the complete DNA polymerase III complex (By similarity).</text>
</comment>
<comment type="subcellular location">
    <subcellularLocation>
        <location evidence="1">Cytoplasm</location>
    </subcellularLocation>
</comment>
<comment type="similarity">
    <text evidence="2">Belongs to the DNA polymerase type-C family. DnaE subfamily.</text>
</comment>
<evidence type="ECO:0000250" key="1"/>
<evidence type="ECO:0000305" key="2"/>
<sequence>MFAQLDTKTVYSFMDSLIDLNHYFERAKQFGYHTIGIMDKDNLYGAYHFIKGCQKNGLQPVLGLEIEILYQERQVLLNLIAQNTQGYHQLLKISTAKMSGKLHMDYFCQHLEGIAVIIPSKGWSDTLVVPFDYYMGVDQYTDLSHMDSKRQLIPLRTVRYFAQDDMETLHMLHAIRDNLSLAETPVVESDQELADCQQLTAFYQTHCPQALQNLEDLVSGIYYDFDTNLKLPHFNRDKSAKQELQDLTEAGLKEKGLWKEPYQSRLLHELVIISDMGFDDYFLIVWDLLRFGRSKGYYMGMGRGSAAGSLVAYALNITGIDPVQHDLLFERFLNKERYSMPDIDIDLPDIYRSEFLRYVRNRYGSDHSAQIVTFSTFGQAIRDVFKRFGVPEYELTNLTKKIGFKDSLATVYEKSISFRQVINSRTEFQKAFAIAKRIEGNPRQTSIHAAGIVMSDDALTNHIPLKSGDDMMITQYDAHAVEANGLLKMDFLGLRNLTFVQKMQEKVAKDYGCQIDITAIDLEDPQTLALFAKGDTKGIFQFEQNGAINLLKRIKPQRFEEIVATTSLNRPGASDYTTNFIKRREGQEKIDLIDPVIAPILEPTYGIMLYQEQVMQIAQVYAGFTLGKADLLRRAMSKKNLQEMQKMEEDFIASAKHLGRAEETARGLFKRMEKFAGYGFNRSHAFAYSALAFQLAYFKAHYPAVFYDIMMNYSSSDYITDALESDFQVAQVTINSIPYTDKIEASKIYMGLKNIKGLPRDFAYWIIEQRPFNSVEDFLTRTPEKYQKKVFLEPLIKIGLFDCFEPNRKKILDNLDGLLVFVNELGSLFSDSSFSWVDTKDYSVTEKYSLEQEIVGVGMSKHPLIDIAEKSTQTFTPISQLVKESEAVVLIQIDSIRIIRTKTSGQQMAFLSVNDTKKKLDVTLFPQEYAIYKDQLKEGEFYYLKGRIKERDHRLQMVCQQVQMAISQKYWLLVENHQFDSQISEILGAFPGTTPVVIHYQKNKETIALTKIQVHVTENLKEKLRPFVLKTVFR</sequence>
<feature type="chain" id="PRO_0000103349" description="DNA polymerase III subunit alpha">
    <location>
        <begin position="1"/>
        <end position="1034"/>
    </location>
</feature>
<name>DPO3A_STRPY</name>
<dbReference type="EC" id="2.7.7.7"/>
<dbReference type="EMBL" id="AF280766">
    <property type="protein sequence ID" value="AAF98350.1"/>
    <property type="molecule type" value="Genomic_DNA"/>
</dbReference>
<dbReference type="SMR" id="P0C0F2"/>
<dbReference type="STRING" id="1314.SD89_04915"/>
<dbReference type="eggNOG" id="COG0587">
    <property type="taxonomic scope" value="Bacteria"/>
</dbReference>
<dbReference type="GO" id="GO:0005737">
    <property type="term" value="C:cytoplasm"/>
    <property type="evidence" value="ECO:0007669"/>
    <property type="project" value="UniProtKB-SubCell"/>
</dbReference>
<dbReference type="GO" id="GO:0008408">
    <property type="term" value="F:3'-5' exonuclease activity"/>
    <property type="evidence" value="ECO:0007669"/>
    <property type="project" value="InterPro"/>
</dbReference>
<dbReference type="GO" id="GO:0003887">
    <property type="term" value="F:DNA-directed DNA polymerase activity"/>
    <property type="evidence" value="ECO:0007669"/>
    <property type="project" value="UniProtKB-KW"/>
</dbReference>
<dbReference type="GO" id="GO:0003676">
    <property type="term" value="F:nucleic acid binding"/>
    <property type="evidence" value="ECO:0007669"/>
    <property type="project" value="InterPro"/>
</dbReference>
<dbReference type="GO" id="GO:0006260">
    <property type="term" value="P:DNA replication"/>
    <property type="evidence" value="ECO:0007669"/>
    <property type="project" value="UniProtKB-KW"/>
</dbReference>
<dbReference type="CDD" id="cd04485">
    <property type="entry name" value="DnaE_OBF"/>
    <property type="match status" value="1"/>
</dbReference>
<dbReference type="CDD" id="cd07431">
    <property type="entry name" value="PHP_PolIIIA"/>
    <property type="match status" value="1"/>
</dbReference>
<dbReference type="Gene3D" id="1.10.150.870">
    <property type="match status" value="1"/>
</dbReference>
<dbReference type="Gene3D" id="1.10.10.1600">
    <property type="entry name" value="Bacterial DNA polymerase III alpha subunit, thumb domain"/>
    <property type="match status" value="1"/>
</dbReference>
<dbReference type="Gene3D" id="3.20.20.140">
    <property type="entry name" value="Metal-dependent hydrolases"/>
    <property type="match status" value="1"/>
</dbReference>
<dbReference type="Gene3D" id="2.40.50.140">
    <property type="entry name" value="Nucleic acid-binding proteins"/>
    <property type="match status" value="1"/>
</dbReference>
<dbReference type="InterPro" id="IPR011708">
    <property type="entry name" value="DNA_pol3_alpha_NTPase_dom"/>
</dbReference>
<dbReference type="InterPro" id="IPR041931">
    <property type="entry name" value="DNA_pol3_alpha_thumb_dom"/>
</dbReference>
<dbReference type="InterPro" id="IPR040982">
    <property type="entry name" value="DNA_pol3_finger"/>
</dbReference>
<dbReference type="InterPro" id="IPR004805">
    <property type="entry name" value="DnaE2/DnaE/PolC"/>
</dbReference>
<dbReference type="InterPro" id="IPR029460">
    <property type="entry name" value="DNAPol_HHH"/>
</dbReference>
<dbReference type="InterPro" id="IPR012340">
    <property type="entry name" value="NA-bd_OB-fold"/>
</dbReference>
<dbReference type="InterPro" id="IPR004365">
    <property type="entry name" value="NA-bd_OB_tRNA"/>
</dbReference>
<dbReference type="InterPro" id="IPR004013">
    <property type="entry name" value="PHP_dom"/>
</dbReference>
<dbReference type="InterPro" id="IPR003141">
    <property type="entry name" value="Pol/His_phosphatase_N"/>
</dbReference>
<dbReference type="InterPro" id="IPR016195">
    <property type="entry name" value="Pol/histidinol_Pase-like"/>
</dbReference>
<dbReference type="NCBIfam" id="TIGR00594">
    <property type="entry name" value="polc"/>
    <property type="match status" value="1"/>
</dbReference>
<dbReference type="NCBIfam" id="NF005582">
    <property type="entry name" value="PRK07279.1"/>
    <property type="match status" value="1"/>
</dbReference>
<dbReference type="PANTHER" id="PTHR32294">
    <property type="entry name" value="DNA POLYMERASE III SUBUNIT ALPHA"/>
    <property type="match status" value="1"/>
</dbReference>
<dbReference type="PANTHER" id="PTHR32294:SF0">
    <property type="entry name" value="DNA POLYMERASE III SUBUNIT ALPHA"/>
    <property type="match status" value="1"/>
</dbReference>
<dbReference type="Pfam" id="PF07733">
    <property type="entry name" value="DNA_pol3_alpha"/>
    <property type="match status" value="1"/>
</dbReference>
<dbReference type="Pfam" id="PF17657">
    <property type="entry name" value="DNA_pol3_finger"/>
    <property type="match status" value="1"/>
</dbReference>
<dbReference type="Pfam" id="PF14579">
    <property type="entry name" value="HHH_6"/>
    <property type="match status" value="1"/>
</dbReference>
<dbReference type="Pfam" id="PF02811">
    <property type="entry name" value="PHP"/>
    <property type="match status" value="1"/>
</dbReference>
<dbReference type="Pfam" id="PF01336">
    <property type="entry name" value="tRNA_anti-codon"/>
    <property type="match status" value="1"/>
</dbReference>
<dbReference type="SMART" id="SM00481">
    <property type="entry name" value="POLIIIAc"/>
    <property type="match status" value="1"/>
</dbReference>
<dbReference type="SUPFAM" id="SSF89550">
    <property type="entry name" value="PHP domain-like"/>
    <property type="match status" value="1"/>
</dbReference>